<gene>
    <name type="primary">ywpG</name>
    <name type="ordered locus">BSU36320</name>
</gene>
<proteinExistence type="evidence at protein level"/>
<comment type="subunit">
    <text evidence="2">Interacts with both the D1 and D2 domains of dynamin-like protein DynA.</text>
</comment>
<comment type="subcellular location">
    <subcellularLocation>
        <location evidence="2">Cell membrane</location>
        <topology evidence="3">Peripheral membrane protein</topology>
    </subcellularLocation>
    <text evidence="2">Forms foci, some at cell poles, some at midcell possibly at septation sites; localization does not depend on dynA or minJ.</text>
</comment>
<comment type="induction">
    <text evidence="1">Only expressed during growth in minimal medium (PubMed:14762004).</text>
</comment>
<protein>
    <recommendedName>
        <fullName>Protein YwpG</fullName>
    </recommendedName>
</protein>
<accession>P94589</accession>
<feature type="chain" id="PRO_0000049992" description="Protein YwpG">
    <location>
        <begin position="1"/>
        <end position="127"/>
    </location>
</feature>
<keyword id="KW-1003">Cell membrane</keyword>
<keyword id="KW-0472">Membrane</keyword>
<keyword id="KW-1185">Reference proteome</keyword>
<reference key="1">
    <citation type="journal article" date="1997" name="Microbiology">
        <title>The Bacillus subtilis genome from gerBC (311 degrees) to licR (334 degrees).</title>
        <authorList>
            <person name="Presecan E."/>
            <person name="Moszer I."/>
            <person name="Boursier L."/>
            <person name="Cruz Ramos H."/>
            <person name="De La Fuente V."/>
            <person name="Hullo M.-F."/>
            <person name="Lelong C."/>
            <person name="Schleich S."/>
            <person name="Sekowska A."/>
            <person name="Song B.H."/>
            <person name="Villani G."/>
            <person name="Kunst F."/>
            <person name="Danchin A."/>
            <person name="Glaser P."/>
        </authorList>
    </citation>
    <scope>NUCLEOTIDE SEQUENCE [GENOMIC DNA]</scope>
    <source>
        <strain>168</strain>
    </source>
</reference>
<reference key="2">
    <citation type="journal article" date="1997" name="Nature">
        <title>The complete genome sequence of the Gram-positive bacterium Bacillus subtilis.</title>
        <authorList>
            <person name="Kunst F."/>
            <person name="Ogasawara N."/>
            <person name="Moszer I."/>
            <person name="Albertini A.M."/>
            <person name="Alloni G."/>
            <person name="Azevedo V."/>
            <person name="Bertero M.G."/>
            <person name="Bessieres P."/>
            <person name="Bolotin A."/>
            <person name="Borchert S."/>
            <person name="Borriss R."/>
            <person name="Boursier L."/>
            <person name="Brans A."/>
            <person name="Braun M."/>
            <person name="Brignell S.C."/>
            <person name="Bron S."/>
            <person name="Brouillet S."/>
            <person name="Bruschi C.V."/>
            <person name="Caldwell B."/>
            <person name="Capuano V."/>
            <person name="Carter N.M."/>
            <person name="Choi S.-K."/>
            <person name="Codani J.-J."/>
            <person name="Connerton I.F."/>
            <person name="Cummings N.J."/>
            <person name="Daniel R.A."/>
            <person name="Denizot F."/>
            <person name="Devine K.M."/>
            <person name="Duesterhoeft A."/>
            <person name="Ehrlich S.D."/>
            <person name="Emmerson P.T."/>
            <person name="Entian K.-D."/>
            <person name="Errington J."/>
            <person name="Fabret C."/>
            <person name="Ferrari E."/>
            <person name="Foulger D."/>
            <person name="Fritz C."/>
            <person name="Fujita M."/>
            <person name="Fujita Y."/>
            <person name="Fuma S."/>
            <person name="Galizzi A."/>
            <person name="Galleron N."/>
            <person name="Ghim S.-Y."/>
            <person name="Glaser P."/>
            <person name="Goffeau A."/>
            <person name="Golightly E.J."/>
            <person name="Grandi G."/>
            <person name="Guiseppi G."/>
            <person name="Guy B.J."/>
            <person name="Haga K."/>
            <person name="Haiech J."/>
            <person name="Harwood C.R."/>
            <person name="Henaut A."/>
            <person name="Hilbert H."/>
            <person name="Holsappel S."/>
            <person name="Hosono S."/>
            <person name="Hullo M.-F."/>
            <person name="Itaya M."/>
            <person name="Jones L.-M."/>
            <person name="Joris B."/>
            <person name="Karamata D."/>
            <person name="Kasahara Y."/>
            <person name="Klaerr-Blanchard M."/>
            <person name="Klein C."/>
            <person name="Kobayashi Y."/>
            <person name="Koetter P."/>
            <person name="Koningstein G."/>
            <person name="Krogh S."/>
            <person name="Kumano M."/>
            <person name="Kurita K."/>
            <person name="Lapidus A."/>
            <person name="Lardinois S."/>
            <person name="Lauber J."/>
            <person name="Lazarevic V."/>
            <person name="Lee S.-M."/>
            <person name="Levine A."/>
            <person name="Liu H."/>
            <person name="Masuda S."/>
            <person name="Mauel C."/>
            <person name="Medigue C."/>
            <person name="Medina N."/>
            <person name="Mellado R.P."/>
            <person name="Mizuno M."/>
            <person name="Moestl D."/>
            <person name="Nakai S."/>
            <person name="Noback M."/>
            <person name="Noone D."/>
            <person name="O'Reilly M."/>
            <person name="Ogawa K."/>
            <person name="Ogiwara A."/>
            <person name="Oudega B."/>
            <person name="Park S.-H."/>
            <person name="Parro V."/>
            <person name="Pohl T.M."/>
            <person name="Portetelle D."/>
            <person name="Porwollik S."/>
            <person name="Prescott A.M."/>
            <person name="Presecan E."/>
            <person name="Pujic P."/>
            <person name="Purnelle B."/>
            <person name="Rapoport G."/>
            <person name="Rey M."/>
            <person name="Reynolds S."/>
            <person name="Rieger M."/>
            <person name="Rivolta C."/>
            <person name="Rocha E."/>
            <person name="Roche B."/>
            <person name="Rose M."/>
            <person name="Sadaie Y."/>
            <person name="Sato T."/>
            <person name="Scanlan E."/>
            <person name="Schleich S."/>
            <person name="Schroeter R."/>
            <person name="Scoffone F."/>
            <person name="Sekiguchi J."/>
            <person name="Sekowska A."/>
            <person name="Seror S.J."/>
            <person name="Serror P."/>
            <person name="Shin B.-S."/>
            <person name="Soldo B."/>
            <person name="Sorokin A."/>
            <person name="Tacconi E."/>
            <person name="Takagi T."/>
            <person name="Takahashi H."/>
            <person name="Takemaru K."/>
            <person name="Takeuchi M."/>
            <person name="Tamakoshi A."/>
            <person name="Tanaka T."/>
            <person name="Terpstra P."/>
            <person name="Tognoni A."/>
            <person name="Tosato V."/>
            <person name="Uchiyama S."/>
            <person name="Vandenbol M."/>
            <person name="Vannier F."/>
            <person name="Vassarotti A."/>
            <person name="Viari A."/>
            <person name="Wambutt R."/>
            <person name="Wedler E."/>
            <person name="Wedler H."/>
            <person name="Weitzenegger T."/>
            <person name="Winters P."/>
            <person name="Wipat A."/>
            <person name="Yamamoto H."/>
            <person name="Yamane K."/>
            <person name="Yasumoto K."/>
            <person name="Yata K."/>
            <person name="Yoshida K."/>
            <person name="Yoshikawa H.-F."/>
            <person name="Zumstein E."/>
            <person name="Yoshikawa H."/>
            <person name="Danchin A."/>
        </authorList>
    </citation>
    <scope>NUCLEOTIDE SEQUENCE [LARGE SCALE GENOMIC DNA]</scope>
    <source>
        <strain>168</strain>
    </source>
</reference>
<reference key="3">
    <citation type="journal article" date="2004" name="J. Bacteriol.">
        <title>Differential expression of two paralogous genes of Bacillus subtilis encoding single-stranded DNA binding protein.</title>
        <authorList>
            <person name="Lindner C."/>
            <person name="Nijland R."/>
            <person name="van Hartskamp M."/>
            <person name="Bron S."/>
            <person name="Hamoen L.W."/>
            <person name="Kuipers O.P."/>
        </authorList>
    </citation>
    <scope>INDUCTION</scope>
    <source>
        <strain>168</strain>
    </source>
</reference>
<reference key="4">
    <citation type="journal article" date="2012" name="Commun. Integr. Biol.">
        <title>Identification of interaction partners of the dynamin-like protein DynA from Bacillus subtilis.</title>
        <authorList>
            <person name="Buermann F."/>
            <person name="Sawant P."/>
            <person name="Bramkamp M."/>
        </authorList>
    </citation>
    <scope>INTERACTION WITH DYNA</scope>
    <scope>SUBUNIT</scope>
    <scope>SUBCELLULAR LOCATION</scope>
    <source>
        <strain>168</strain>
    </source>
</reference>
<evidence type="ECO:0000269" key="1">
    <source>
    </source>
</evidence>
<evidence type="ECO:0000269" key="2">
    <source>
    </source>
</evidence>
<evidence type="ECO:0000305" key="3"/>
<dbReference type="EMBL" id="Z83337">
    <property type="protein sequence ID" value="CAB05948.1"/>
    <property type="molecule type" value="Genomic_DNA"/>
</dbReference>
<dbReference type="EMBL" id="AL009126">
    <property type="protein sequence ID" value="CAB15649.1"/>
    <property type="molecule type" value="Genomic_DNA"/>
</dbReference>
<dbReference type="PIR" id="A70066">
    <property type="entry name" value="A70066"/>
</dbReference>
<dbReference type="RefSeq" id="NP_391513.1">
    <property type="nucleotide sequence ID" value="NC_000964.3"/>
</dbReference>
<dbReference type="RefSeq" id="WP_003227796.1">
    <property type="nucleotide sequence ID" value="NZ_OZ025638.1"/>
</dbReference>
<dbReference type="FunCoup" id="P94589">
    <property type="interactions" value="16"/>
</dbReference>
<dbReference type="STRING" id="224308.BSU36320"/>
<dbReference type="PaxDb" id="224308-BSU36320"/>
<dbReference type="EnsemblBacteria" id="CAB15649">
    <property type="protein sequence ID" value="CAB15649"/>
    <property type="gene ID" value="BSU_36320"/>
</dbReference>
<dbReference type="GeneID" id="936912"/>
<dbReference type="KEGG" id="bsu:BSU36320"/>
<dbReference type="PATRIC" id="fig|224308.179.peg.3931"/>
<dbReference type="eggNOG" id="ENOG5030CM1">
    <property type="taxonomic scope" value="Bacteria"/>
</dbReference>
<dbReference type="InParanoid" id="P94589"/>
<dbReference type="OrthoDB" id="2926818at2"/>
<dbReference type="BioCyc" id="BSUB:BSU36320-MONOMER"/>
<dbReference type="Proteomes" id="UP000001570">
    <property type="component" value="Chromosome"/>
</dbReference>
<dbReference type="GO" id="GO:0005886">
    <property type="term" value="C:plasma membrane"/>
    <property type="evidence" value="ECO:0007669"/>
    <property type="project" value="UniProtKB-SubCell"/>
</dbReference>
<sequence length="127" mass="15390">MNQFRLKEIYIDGVPSESHLIQKEVTYMLSRKEVFEVHLNKKGRISFLYETQDGMEQYKIKLSMPEKKLSFQWFAWDGSSYVRMNTQNWLTKQIFFRFLKSTYFFKGKKQKMFLAEGKMKTKDKNRG</sequence>
<organism>
    <name type="scientific">Bacillus subtilis (strain 168)</name>
    <dbReference type="NCBI Taxonomy" id="224308"/>
    <lineage>
        <taxon>Bacteria</taxon>
        <taxon>Bacillati</taxon>
        <taxon>Bacillota</taxon>
        <taxon>Bacilli</taxon>
        <taxon>Bacillales</taxon>
        <taxon>Bacillaceae</taxon>
        <taxon>Bacillus</taxon>
    </lineage>
</organism>
<name>YWPG_BACSU</name>